<organism>
    <name type="scientific">Arabidopsis thaliana</name>
    <name type="common">Mouse-ear cress</name>
    <dbReference type="NCBI Taxonomy" id="3702"/>
    <lineage>
        <taxon>Eukaryota</taxon>
        <taxon>Viridiplantae</taxon>
        <taxon>Streptophyta</taxon>
        <taxon>Embryophyta</taxon>
        <taxon>Tracheophyta</taxon>
        <taxon>Spermatophyta</taxon>
        <taxon>Magnoliopsida</taxon>
        <taxon>eudicotyledons</taxon>
        <taxon>Gunneridae</taxon>
        <taxon>Pentapetalae</taxon>
        <taxon>rosids</taxon>
        <taxon>malvids</taxon>
        <taxon>Brassicales</taxon>
        <taxon>Brassicaceae</taxon>
        <taxon>Camelineae</taxon>
        <taxon>Arabidopsis</taxon>
    </lineage>
</organism>
<comment type="function">
    <text evidence="1">Malate transporter.</text>
</comment>
<comment type="subcellular location">
    <subcellularLocation>
        <location evidence="4">Membrane</location>
        <topology evidence="4">Multi-pass membrane protein</topology>
    </subcellularLocation>
</comment>
<comment type="alternative products">
    <event type="alternative splicing"/>
    <isoform>
        <id>Q9LS23-1</id>
        <name>1</name>
        <sequence type="displayed"/>
    </isoform>
    <isoform>
        <id>Q9LS23-2</id>
        <name>2</name>
        <sequence type="described" ref="VSP_040187 VSP_040188"/>
    </isoform>
</comment>
<comment type="similarity">
    <text evidence="4">Belongs to the aromatic acid exporter (TC 2.A.85) family.</text>
</comment>
<dbReference type="EMBL" id="AB028605">
    <property type="protein sequence ID" value="BAA97531.1"/>
    <property type="molecule type" value="Genomic_DNA"/>
</dbReference>
<dbReference type="EMBL" id="CP002688">
    <property type="protein sequence ID" value="AED95402.1"/>
    <property type="molecule type" value="Genomic_DNA"/>
</dbReference>
<dbReference type="EMBL" id="AY735703">
    <property type="protein sequence ID" value="AAU44573.1"/>
    <property type="molecule type" value="mRNA"/>
</dbReference>
<dbReference type="EMBL" id="AY735704">
    <property type="protein sequence ID" value="AAU44574.1"/>
    <property type="molecule type" value="mRNA"/>
</dbReference>
<dbReference type="EMBL" id="AY954875">
    <property type="protein sequence ID" value="AAX55201.1"/>
    <property type="molecule type" value="mRNA"/>
</dbReference>
<dbReference type="RefSeq" id="NP_199472.1">
    <molecule id="Q9LS23-1"/>
    <property type="nucleotide sequence ID" value="NM_124030.3"/>
</dbReference>
<dbReference type="SMR" id="Q9LS23"/>
<dbReference type="FunCoup" id="Q9LS23">
    <property type="interactions" value="6"/>
</dbReference>
<dbReference type="STRING" id="3702.Q9LS23"/>
<dbReference type="iPTMnet" id="Q9LS23"/>
<dbReference type="PaxDb" id="3702-AT5G46600.1"/>
<dbReference type="EnsemblPlants" id="AT5G46600.1">
    <molecule id="Q9LS23-1"/>
    <property type="protein sequence ID" value="AT5G46600.1"/>
    <property type="gene ID" value="AT5G46600"/>
</dbReference>
<dbReference type="GeneID" id="834703"/>
<dbReference type="Gramene" id="AT5G46600.1">
    <molecule id="Q9LS23-1"/>
    <property type="protein sequence ID" value="AT5G46600.1"/>
    <property type="gene ID" value="AT5G46600"/>
</dbReference>
<dbReference type="KEGG" id="ath:AT5G46600"/>
<dbReference type="Araport" id="AT5G46600"/>
<dbReference type="TAIR" id="AT5G46600"/>
<dbReference type="eggNOG" id="KOG4711">
    <property type="taxonomic scope" value="Eukaryota"/>
</dbReference>
<dbReference type="HOGENOM" id="CLU_020841_1_2_1"/>
<dbReference type="InParanoid" id="Q9LS23"/>
<dbReference type="OMA" id="MEISMED"/>
<dbReference type="OrthoDB" id="68611at2759"/>
<dbReference type="PhylomeDB" id="Q9LS23"/>
<dbReference type="PRO" id="PR:Q9LS23"/>
<dbReference type="Proteomes" id="UP000006548">
    <property type="component" value="Chromosome 5"/>
</dbReference>
<dbReference type="ExpressionAtlas" id="Q9LS23">
    <property type="expression patterns" value="baseline and differential"/>
</dbReference>
<dbReference type="GO" id="GO:0016020">
    <property type="term" value="C:membrane"/>
    <property type="evidence" value="ECO:0007669"/>
    <property type="project" value="UniProtKB-SubCell"/>
</dbReference>
<dbReference type="GO" id="GO:0015743">
    <property type="term" value="P:malate transport"/>
    <property type="evidence" value="ECO:0007669"/>
    <property type="project" value="InterPro"/>
</dbReference>
<dbReference type="GO" id="GO:0034220">
    <property type="term" value="P:monoatomic ion transmembrane transport"/>
    <property type="evidence" value="ECO:0007669"/>
    <property type="project" value="UniProtKB-KW"/>
</dbReference>
<dbReference type="InterPro" id="IPR020966">
    <property type="entry name" value="ALMT"/>
</dbReference>
<dbReference type="PANTHER" id="PTHR31086">
    <property type="entry name" value="ALUMINUM-ACTIVATED MALATE TRANSPORTER 10"/>
    <property type="match status" value="1"/>
</dbReference>
<dbReference type="Pfam" id="PF11744">
    <property type="entry name" value="ALMT"/>
    <property type="match status" value="1"/>
</dbReference>
<accession>Q9LS23</accession>
<accession>Q5XV18</accession>
<accession>Q5XV19</accession>
<sequence>MGYKVEARSMEISMEDEDSRKKRKKGLNLPKKMKKILRNLWNVGKEDPRRVIHALKVGVALTLVSLLYLMEPFFEGVGKNALWAVMTVVVVLEFSAGATLRKGLNRGLGTLIAGSLAFFIEWVAIHSGKILGGIFIGTSVFTIGSMITYMRFIPYIKKNYDYGMLVFLLTFNLITVSSYRVDTVIKIAHERLYTIGMGIGICLFMSLLFFPIWSGDDLHKSTITKLQGLSRCIEACVSEYFEEKLKDNETSDSESDDEDLIYNGYNTVLDSKSADEALAMYAKWEPRHTRRCNKFPSQQYIKVGSVLRKFGYTVVALHGCLQTEIQTPRSIRVLFKDPCVRLAGEICKVLSELSESIQNRRHCSSEILSDSLEAALKDLNSTIKSQPKLFLGSNLHSNITNKHLNGHVSYYNETNSNGTVSYHNDNNTNGCVLGETIEENDTVSPLPLNSVVSLSSLRSVKKSAATGEKRRLRKQLSKIAVMKSLEFSEALPFAAFASLLVEMVARLDTVIDEVEELGTIACFKEYDKTVEVRIENRLI</sequence>
<gene>
    <name type="primary">ALMT13</name>
    <name type="ordered locus">At5g46600</name>
    <name type="ORF">F10E10.8</name>
</gene>
<evidence type="ECO:0000250" key="1"/>
<evidence type="ECO:0000255" key="2"/>
<evidence type="ECO:0000303" key="3">
    <source ref="3"/>
</evidence>
<evidence type="ECO:0000305" key="4"/>
<feature type="chain" id="PRO_0000401472" description="Aluminum-activated malate transporter 13">
    <location>
        <begin position="1"/>
        <end position="539"/>
    </location>
</feature>
<feature type="transmembrane region" description="Helical" evidence="2">
    <location>
        <begin position="57"/>
        <end position="77"/>
    </location>
</feature>
<feature type="transmembrane region" description="Helical" evidence="2">
    <location>
        <begin position="80"/>
        <end position="100"/>
    </location>
</feature>
<feature type="transmembrane region" description="Helical" evidence="2">
    <location>
        <begin position="107"/>
        <end position="127"/>
    </location>
</feature>
<feature type="transmembrane region" description="Helical" evidence="2">
    <location>
        <begin position="130"/>
        <end position="150"/>
    </location>
</feature>
<feature type="transmembrane region" description="Helical" evidence="2">
    <location>
        <begin position="165"/>
        <end position="185"/>
    </location>
</feature>
<feature type="transmembrane region" description="Helical" evidence="2">
    <location>
        <begin position="192"/>
        <end position="212"/>
    </location>
</feature>
<feature type="splice variant" id="VSP_040187" description="In isoform 2." evidence="3">
    <original>TPRSIRVLF</original>
    <variation>VIYSTFYLH</variation>
    <location>
        <begin position="327"/>
        <end position="335"/>
    </location>
</feature>
<feature type="splice variant" id="VSP_040188" description="In isoform 2." evidence="3">
    <location>
        <begin position="336"/>
        <end position="539"/>
    </location>
</feature>
<feature type="sequence conflict" description="In Ref. 3; AAU44574." evidence="4" ref="3">
    <original>A</original>
    <variation>P</variation>
    <location>
        <position position="521"/>
    </location>
</feature>
<name>ALMTD_ARATH</name>
<reference key="1">
    <citation type="submission" date="1999-06" db="EMBL/GenBank/DDBJ databases">
        <title>Structural analysis of Arabidopsis thaliana chromosome 5. XI.</title>
        <authorList>
            <person name="Kaneko T."/>
            <person name="Katoh T."/>
            <person name="Asamizu E."/>
            <person name="Sato S."/>
            <person name="Nakamura Y."/>
            <person name="Kotani H."/>
            <person name="Tabata S."/>
        </authorList>
    </citation>
    <scope>NUCLEOTIDE SEQUENCE [LARGE SCALE GENOMIC DNA]</scope>
    <source>
        <strain>cv. Columbia</strain>
    </source>
</reference>
<reference key="2">
    <citation type="journal article" date="2017" name="Plant J.">
        <title>Araport11: a complete reannotation of the Arabidopsis thaliana reference genome.</title>
        <authorList>
            <person name="Cheng C.Y."/>
            <person name="Krishnakumar V."/>
            <person name="Chan A.P."/>
            <person name="Thibaud-Nissen F."/>
            <person name="Schobel S."/>
            <person name="Town C.D."/>
        </authorList>
    </citation>
    <scope>GENOME REANNOTATION</scope>
    <source>
        <strain>cv. Columbia</strain>
    </source>
</reference>
<reference key="3">
    <citation type="submission" date="2005-03" db="EMBL/GenBank/DDBJ databases">
        <authorList>
            <person name="Underwood B.A."/>
            <person name="Xiao Y.-L."/>
            <person name="Moskal W.A. Jr."/>
            <person name="Monaghan E.L."/>
            <person name="Wang W."/>
            <person name="Redman J.C."/>
            <person name="Wu H.C."/>
            <person name="Utterback T."/>
            <person name="Town C.D."/>
        </authorList>
    </citation>
    <scope>NUCLEOTIDE SEQUENCE [LARGE SCALE MRNA] (ISOFORMS 1 AND 2)</scope>
    <source>
        <strain>cv. Columbia</strain>
    </source>
</reference>
<reference key="4">
    <citation type="journal article" date="2006" name="Proc. Natl. Acad. Sci. U.S.A.">
        <title>AtALMT1, which encodes a malate transporter, is identified as one of several genes critical for aluminum tolerance in Arabidopsis.</title>
        <authorList>
            <person name="Hoekenga O.A."/>
            <person name="Maron L.G."/>
            <person name="Pineros M.A."/>
            <person name="Cancado G.M."/>
            <person name="Shaff J."/>
            <person name="Kobayashi Y."/>
            <person name="Ryan P.R."/>
            <person name="Dong B."/>
            <person name="Delhaize E."/>
            <person name="Sasaki T."/>
            <person name="Matsumoto H."/>
            <person name="Yamamoto Y."/>
            <person name="Koyama H."/>
            <person name="Kochian L.V."/>
        </authorList>
    </citation>
    <scope>GENE FAMILY</scope>
    <scope>NOMENCLATURE</scope>
</reference>
<proteinExistence type="evidence at transcript level"/>
<keyword id="KW-0025">Alternative splicing</keyword>
<keyword id="KW-0407">Ion channel</keyword>
<keyword id="KW-0406">Ion transport</keyword>
<keyword id="KW-0472">Membrane</keyword>
<keyword id="KW-1185">Reference proteome</keyword>
<keyword id="KW-0812">Transmembrane</keyword>
<keyword id="KW-1133">Transmembrane helix</keyword>
<keyword id="KW-0813">Transport</keyword>
<protein>
    <recommendedName>
        <fullName>Aluminum-activated malate transporter 13</fullName>
        <shortName>AtALMT13</shortName>
    </recommendedName>
</protein>